<dbReference type="EMBL" id="CP001283">
    <property type="protein sequence ID" value="ACK87291.1"/>
    <property type="molecule type" value="Genomic_DNA"/>
</dbReference>
<dbReference type="RefSeq" id="WP_000456010.1">
    <property type="nucleotide sequence ID" value="NC_011773.1"/>
</dbReference>
<dbReference type="SMR" id="B7JML4"/>
<dbReference type="GeneID" id="45022176"/>
<dbReference type="KEGG" id="bcu:BCAH820_2312"/>
<dbReference type="HOGENOM" id="CLU_111022_0_0_9"/>
<dbReference type="Proteomes" id="UP000001363">
    <property type="component" value="Chromosome"/>
</dbReference>
<dbReference type="GO" id="GO:0005737">
    <property type="term" value="C:cytoplasm"/>
    <property type="evidence" value="ECO:0007669"/>
    <property type="project" value="UniProtKB-SubCell"/>
</dbReference>
<dbReference type="GO" id="GO:0003690">
    <property type="term" value="F:double-stranded DNA binding"/>
    <property type="evidence" value="ECO:0007669"/>
    <property type="project" value="UniProtKB-UniRule"/>
</dbReference>
<dbReference type="GO" id="GO:0008356">
    <property type="term" value="P:asymmetric cell division"/>
    <property type="evidence" value="ECO:0007669"/>
    <property type="project" value="UniProtKB-UniRule"/>
</dbReference>
<dbReference type="GO" id="GO:0030261">
    <property type="term" value="P:chromosome condensation"/>
    <property type="evidence" value="ECO:0007669"/>
    <property type="project" value="UniProtKB-UniRule"/>
</dbReference>
<dbReference type="GO" id="GO:0007059">
    <property type="term" value="P:chromosome segregation"/>
    <property type="evidence" value="ECO:0007669"/>
    <property type="project" value="UniProtKB-UniRule"/>
</dbReference>
<dbReference type="GO" id="GO:0030435">
    <property type="term" value="P:sporulation resulting in formation of a cellular spore"/>
    <property type="evidence" value="ECO:0007669"/>
    <property type="project" value="UniProtKB-UniRule"/>
</dbReference>
<dbReference type="Gene3D" id="1.10.1660.10">
    <property type="match status" value="1"/>
</dbReference>
<dbReference type="HAMAP" id="MF_01170">
    <property type="entry name" value="RacA"/>
    <property type="match status" value="1"/>
</dbReference>
<dbReference type="InterPro" id="IPR023522">
    <property type="entry name" value="Chrosome_anchoring_RacA"/>
</dbReference>
<dbReference type="NCBIfam" id="NF009646">
    <property type="entry name" value="PRK13182.1-1"/>
    <property type="match status" value="1"/>
</dbReference>
<dbReference type="SUPFAM" id="SSF58064">
    <property type="entry name" value="Influenza hemagglutinin (stalk)"/>
    <property type="match status" value="1"/>
</dbReference>
<proteinExistence type="inferred from homology"/>
<organism>
    <name type="scientific">Bacillus cereus (strain AH820)</name>
    <dbReference type="NCBI Taxonomy" id="405535"/>
    <lineage>
        <taxon>Bacteria</taxon>
        <taxon>Bacillati</taxon>
        <taxon>Bacillota</taxon>
        <taxon>Bacilli</taxon>
        <taxon>Bacillales</taxon>
        <taxon>Bacillaceae</taxon>
        <taxon>Bacillus</taxon>
        <taxon>Bacillus cereus group</taxon>
    </lineage>
</organism>
<feature type="chain" id="PRO_1000137972" description="Chromosome-anchoring protein RacA">
    <location>
        <begin position="1"/>
        <end position="180"/>
    </location>
</feature>
<feature type="DNA-binding region" description="H-T-H motif" evidence="1">
    <location>
        <begin position="5"/>
        <end position="25"/>
    </location>
</feature>
<feature type="coiled-coil region" evidence="1">
    <location>
        <begin position="90"/>
        <end position="150"/>
    </location>
</feature>
<name>RACA_BACC0</name>
<gene>
    <name evidence="1" type="primary">racA</name>
    <name type="ordered locus">BCAH820_2312</name>
</gene>
<comment type="function">
    <text evidence="1">Required for the formation of axial filaments and for anchoring the origin regions at the cell poles in sporulating cells, thus ensuring proper chromosome segregation in the prespore. Binds in a dispersed manner throughout the chromosome but preferentially to sites clustered in the origin portion of the chromosome, causing condensation of the chromosome and its remodeling into an elongated, anchored structure.</text>
</comment>
<comment type="subcellular location">
    <subcellularLocation>
        <location evidence="1">Cytoplasm</location>
    </subcellularLocation>
    <text evidence="1">Localizes to cell poles and nucleoid.</text>
</comment>
<comment type="similarity">
    <text evidence="1">Belongs to the RacA family.</text>
</comment>
<evidence type="ECO:0000255" key="1">
    <source>
        <dbReference type="HAMAP-Rule" id="MF_01170"/>
    </source>
</evidence>
<keyword id="KW-0131">Cell cycle</keyword>
<keyword id="KW-0132">Cell division</keyword>
<keyword id="KW-0159">Chromosome partition</keyword>
<keyword id="KW-0175">Coiled coil</keyword>
<keyword id="KW-0963">Cytoplasm</keyword>
<keyword id="KW-0238">DNA-binding</keyword>
<keyword id="KW-0749">Sporulation</keyword>
<protein>
    <recommendedName>
        <fullName evidence="1">Chromosome-anchoring protein RacA</fullName>
    </recommendedName>
</protein>
<reference key="1">
    <citation type="submission" date="2008-10" db="EMBL/GenBank/DDBJ databases">
        <title>Genome sequence of Bacillus cereus AH820.</title>
        <authorList>
            <person name="Dodson R.J."/>
            <person name="Durkin A.S."/>
            <person name="Rosovitz M.J."/>
            <person name="Rasko D.A."/>
            <person name="Hoffmaster A."/>
            <person name="Ravel J."/>
            <person name="Sutton G."/>
        </authorList>
    </citation>
    <scope>NUCLEOTIDE SEQUENCE [LARGE SCALE GENOMIC DNA]</scope>
    <source>
        <strain>AH820</strain>
    </source>
</reference>
<sequence>MEYKTPFIAKKLGVSPKAVVRIAQQLNLTIEKNKYGHFIFTQDDLDQMLEYHRSQIEQSQNTHPTQKTSSNDVEELKTQVNTIVQNISSHDFEQLAAQLNTITRRLDRMEEQMQDKANDVVTYQLLQHRREMEEMLERIQKLEAGLKKEEPIYITPDTKPTYEREKKPKRRKMIFSIFGL</sequence>
<accession>B7JML4</accession>